<accession>Q5UQT7</accession>
<protein>
    <recommendedName>
        <fullName>Probable ribonuclease 3</fullName>
        <ecNumber>3.1.26.3</ecNumber>
    </recommendedName>
    <alternativeName>
        <fullName>Ribonuclease III</fullName>
        <shortName>RNase III</shortName>
    </alternativeName>
</protein>
<organismHost>
    <name type="scientific">Acanthamoeba polyphaga</name>
    <name type="common">Amoeba</name>
    <dbReference type="NCBI Taxonomy" id="5757"/>
</organismHost>
<reference key="1">
    <citation type="journal article" date="2004" name="Science">
        <title>The 1.2-megabase genome sequence of Mimivirus.</title>
        <authorList>
            <person name="Raoult D."/>
            <person name="Audic S."/>
            <person name="Robert C."/>
            <person name="Abergel C."/>
            <person name="Renesto P."/>
            <person name="Ogata H."/>
            <person name="La Scola B."/>
            <person name="Susan M."/>
            <person name="Claverie J.-M."/>
        </authorList>
    </citation>
    <scope>NUCLEOTIDE SEQUENCE [LARGE SCALE GENOMIC DNA]</scope>
    <source>
        <strain>Rowbotham-Bradford</strain>
    </source>
</reference>
<name>RNC_MIMIV</name>
<sequence>MSKFQNYYNNDDNVINYPYIDYIIKSYIPEYYVDTNRRKYVDMHIFEEAMLHVSTIYEESDKTYERLEYLGDAIFHMIITEYFYHRYNEENEGFLTRLRIRIERGDSMVELSKNLGLNNFVQIYGISLNDHILEDIFESFIGAFYLNFGMKYTRLFIIKLIEKHKNLSELIAYDDNYKDLLLRYFHQMKWGHPKYIEEIVIDPKNNQRNKFISKVKNPFDKVIGIGSASTKKKSEQLASQMALTNLGVIIDGEIDTDWINKIEKIETEATQTEIKDKKPMSVFNPNNKLLSKNTIKNLLLQYNTKLPTIDIDLKLFYEAMTHRSYLIRKNLPNRDVPKSKSIVRLQKKSNERLQFLGDAVIHFIIGEYLFNKYADSGEGYLTRLRCKLENSESLFFLAKQSDISSYLLISQNIEVLHGRENVNIIGGGLEAFVGALYLNIGLGTVKQFLLEIMRIELDINQIAENETNYKDLILQLYNKNKWGHPVYKILKEEGPDHCKIFTMGLYLGNKLMGIGKASSKKKAEQIASKKMYQNYINN</sequence>
<gene>
    <name type="ordered locus">MIMI_R343</name>
</gene>
<evidence type="ECO:0000250" key="1"/>
<evidence type="ECO:0000305" key="2"/>
<feature type="chain" id="PRO_0000243980" description="Probable ribonuclease 3">
    <location>
        <begin position="1"/>
        <end position="538"/>
    </location>
</feature>
<feature type="domain" description="RNase III 1">
    <location>
        <begin position="24"/>
        <end position="149"/>
    </location>
</feature>
<feature type="domain" description="RNase III 2">
    <location>
        <begin position="238"/>
        <end position="381"/>
    </location>
</feature>
<feature type="domain" description="DRBM">
    <location>
        <begin position="408"/>
        <end position="477"/>
    </location>
</feature>
<proteinExistence type="inferred from homology"/>
<dbReference type="EC" id="3.1.26.3"/>
<dbReference type="EMBL" id="AY653733">
    <property type="protein sequence ID" value="AAV50612.1"/>
    <property type="molecule type" value="Genomic_DNA"/>
</dbReference>
<dbReference type="SMR" id="Q5UQT7"/>
<dbReference type="KEGG" id="vg:9924960"/>
<dbReference type="OrthoDB" id="4098at10239"/>
<dbReference type="Proteomes" id="UP000001134">
    <property type="component" value="Genome"/>
</dbReference>
<dbReference type="GO" id="GO:0003725">
    <property type="term" value="F:double-stranded RNA binding"/>
    <property type="evidence" value="ECO:0007669"/>
    <property type="project" value="TreeGrafter"/>
</dbReference>
<dbReference type="GO" id="GO:0004525">
    <property type="term" value="F:ribonuclease III activity"/>
    <property type="evidence" value="ECO:0007669"/>
    <property type="project" value="UniProtKB-EC"/>
</dbReference>
<dbReference type="GO" id="GO:0010468">
    <property type="term" value="P:regulation of gene expression"/>
    <property type="evidence" value="ECO:0007669"/>
    <property type="project" value="TreeGrafter"/>
</dbReference>
<dbReference type="GO" id="GO:0006364">
    <property type="term" value="P:rRNA processing"/>
    <property type="evidence" value="ECO:0007669"/>
    <property type="project" value="InterPro"/>
</dbReference>
<dbReference type="CDD" id="cd10845">
    <property type="entry name" value="DSRM_RNAse_III_family"/>
    <property type="match status" value="2"/>
</dbReference>
<dbReference type="CDD" id="cd00593">
    <property type="entry name" value="RIBOc"/>
    <property type="match status" value="2"/>
</dbReference>
<dbReference type="Gene3D" id="3.30.160.20">
    <property type="match status" value="2"/>
</dbReference>
<dbReference type="Gene3D" id="1.10.1520.10">
    <property type="entry name" value="Ribonuclease III domain"/>
    <property type="match status" value="2"/>
</dbReference>
<dbReference type="HAMAP" id="MF_00104">
    <property type="entry name" value="RNase_III"/>
    <property type="match status" value="1"/>
</dbReference>
<dbReference type="InterPro" id="IPR014720">
    <property type="entry name" value="dsRBD_dom"/>
</dbReference>
<dbReference type="InterPro" id="IPR011907">
    <property type="entry name" value="RNase_III"/>
</dbReference>
<dbReference type="InterPro" id="IPR000999">
    <property type="entry name" value="RNase_III_dom"/>
</dbReference>
<dbReference type="InterPro" id="IPR036389">
    <property type="entry name" value="RNase_III_sf"/>
</dbReference>
<dbReference type="PANTHER" id="PTHR11207:SF0">
    <property type="entry name" value="RIBONUCLEASE 3"/>
    <property type="match status" value="1"/>
</dbReference>
<dbReference type="PANTHER" id="PTHR11207">
    <property type="entry name" value="RIBONUCLEASE III"/>
    <property type="match status" value="1"/>
</dbReference>
<dbReference type="Pfam" id="PF00035">
    <property type="entry name" value="dsrm"/>
    <property type="match status" value="2"/>
</dbReference>
<dbReference type="Pfam" id="PF14622">
    <property type="entry name" value="Ribonucleas_3_3"/>
    <property type="match status" value="1"/>
</dbReference>
<dbReference type="Pfam" id="PF00636">
    <property type="entry name" value="Ribonuclease_3"/>
    <property type="match status" value="1"/>
</dbReference>
<dbReference type="SMART" id="SM00358">
    <property type="entry name" value="DSRM"/>
    <property type="match status" value="2"/>
</dbReference>
<dbReference type="SMART" id="SM00535">
    <property type="entry name" value="RIBOc"/>
    <property type="match status" value="2"/>
</dbReference>
<dbReference type="SUPFAM" id="SSF54768">
    <property type="entry name" value="dsRNA-binding domain-like"/>
    <property type="match status" value="2"/>
</dbReference>
<dbReference type="SUPFAM" id="SSF69065">
    <property type="entry name" value="RNase III domain-like"/>
    <property type="match status" value="2"/>
</dbReference>
<dbReference type="PROSITE" id="PS50137">
    <property type="entry name" value="DS_RBD"/>
    <property type="match status" value="1"/>
</dbReference>
<dbReference type="PROSITE" id="PS00517">
    <property type="entry name" value="RNASE_3_1"/>
    <property type="match status" value="1"/>
</dbReference>
<dbReference type="PROSITE" id="PS50142">
    <property type="entry name" value="RNASE_3_2"/>
    <property type="match status" value="2"/>
</dbReference>
<comment type="function">
    <text evidence="1">Digests double-stranded RNA.</text>
</comment>
<comment type="catalytic activity">
    <reaction>
        <text>Endonucleolytic cleavage to 5'-phosphomonoester.</text>
        <dbReference type="EC" id="3.1.26.3"/>
    </reaction>
</comment>
<comment type="similarity">
    <text evidence="2">Belongs to the ribonuclease III family.</text>
</comment>
<keyword id="KW-0255">Endonuclease</keyword>
<keyword id="KW-0378">Hydrolase</keyword>
<keyword id="KW-0540">Nuclease</keyword>
<keyword id="KW-1185">Reference proteome</keyword>
<keyword id="KW-0677">Repeat</keyword>
<keyword id="KW-0694">RNA-binding</keyword>
<organism>
    <name type="scientific">Acanthamoeba polyphaga mimivirus</name>
    <name type="common">APMV</name>
    <dbReference type="NCBI Taxonomy" id="212035"/>
    <lineage>
        <taxon>Viruses</taxon>
        <taxon>Varidnaviria</taxon>
        <taxon>Bamfordvirae</taxon>
        <taxon>Nucleocytoviricota</taxon>
        <taxon>Megaviricetes</taxon>
        <taxon>Imitervirales</taxon>
        <taxon>Mimiviridae</taxon>
        <taxon>Megamimivirinae</taxon>
        <taxon>Mimivirus</taxon>
        <taxon>Mimivirus bradfordmassiliense</taxon>
    </lineage>
</organism>